<dbReference type="EMBL" id="AL009126">
    <property type="protein sequence ID" value="CAB12516.2"/>
    <property type="molecule type" value="Genomic_DNA"/>
</dbReference>
<dbReference type="PIR" id="F69796">
    <property type="entry name" value="F69796"/>
</dbReference>
<dbReference type="RefSeq" id="NP_388578.2">
    <property type="nucleotide sequence ID" value="NC_000964.3"/>
</dbReference>
<dbReference type="RefSeq" id="WP_003243860.1">
    <property type="nucleotide sequence ID" value="NZ_OZ025638.1"/>
</dbReference>
<dbReference type="PDB" id="4R6K">
    <property type="method" value="X-ray"/>
    <property type="resolution" value="1.94 A"/>
    <property type="chains" value="A=21-427"/>
</dbReference>
<dbReference type="PDB" id="5Z6B">
    <property type="method" value="X-ray"/>
    <property type="resolution" value="1.58 A"/>
    <property type="chains" value="A=1-427"/>
</dbReference>
<dbReference type="PDB" id="5Z6C">
    <property type="method" value="X-ray"/>
    <property type="resolution" value="1.97 A"/>
    <property type="chains" value="A=1-427"/>
</dbReference>
<dbReference type="PDBsum" id="4R6K"/>
<dbReference type="PDBsum" id="5Z6B"/>
<dbReference type="PDBsum" id="5Z6C"/>
<dbReference type="SMR" id="O31518"/>
<dbReference type="FunCoup" id="O31518">
    <property type="interactions" value="93"/>
</dbReference>
<dbReference type="STRING" id="224308.BSU06970"/>
<dbReference type="PaxDb" id="224308-BSU06970"/>
<dbReference type="EnsemblBacteria" id="CAB12516">
    <property type="protein sequence ID" value="CAB12516"/>
    <property type="gene ID" value="BSU_06970"/>
</dbReference>
<dbReference type="GeneID" id="936072"/>
<dbReference type="KEGG" id="bsu:BSU06970"/>
<dbReference type="PATRIC" id="fig|224308.179.peg.757"/>
<dbReference type="eggNOG" id="COG1653">
    <property type="taxonomic scope" value="Bacteria"/>
</dbReference>
<dbReference type="InParanoid" id="O31518"/>
<dbReference type="OrthoDB" id="7918484at2"/>
<dbReference type="PhylomeDB" id="O31518"/>
<dbReference type="BioCyc" id="BSUB:BSU06970-MONOMER"/>
<dbReference type="EvolutionaryTrace" id="O31518"/>
<dbReference type="Proteomes" id="UP000001570">
    <property type="component" value="Chromosome"/>
</dbReference>
<dbReference type="Gene3D" id="3.40.190.10">
    <property type="entry name" value="Periplasmic binding protein-like II"/>
    <property type="match status" value="2"/>
</dbReference>
<dbReference type="InterPro" id="IPR050490">
    <property type="entry name" value="Bact_solute-bd_prot1"/>
</dbReference>
<dbReference type="InterPro" id="IPR006059">
    <property type="entry name" value="SBP"/>
</dbReference>
<dbReference type="PANTHER" id="PTHR43649:SF11">
    <property type="entry name" value="ABC TRANSPORTER SUBSTRATE-BINDING PROTEIN YESO-RELATED"/>
    <property type="match status" value="1"/>
</dbReference>
<dbReference type="PANTHER" id="PTHR43649">
    <property type="entry name" value="ARABINOSE-BINDING PROTEIN-RELATED"/>
    <property type="match status" value="1"/>
</dbReference>
<dbReference type="Pfam" id="PF01547">
    <property type="entry name" value="SBP_bac_1"/>
    <property type="match status" value="1"/>
</dbReference>
<dbReference type="SUPFAM" id="SSF53850">
    <property type="entry name" value="Periplasmic binding protein-like II"/>
    <property type="match status" value="1"/>
</dbReference>
<gene>
    <name type="primary">yesO</name>
    <name type="ordered locus">BSU06970</name>
</gene>
<keyword id="KW-0002">3D-structure</keyword>
<keyword id="KW-1185">Reference proteome</keyword>
<organism>
    <name type="scientific">Bacillus subtilis (strain 168)</name>
    <dbReference type="NCBI Taxonomy" id="224308"/>
    <lineage>
        <taxon>Bacteria</taxon>
        <taxon>Bacillati</taxon>
        <taxon>Bacillota</taxon>
        <taxon>Bacilli</taxon>
        <taxon>Bacillales</taxon>
        <taxon>Bacillaceae</taxon>
        <taxon>Bacillus</taxon>
    </lineage>
</organism>
<sequence>MKKICYVLLSLVCVFLFSGCSAGEEASGKKEDVTLRIAWWGGQPRHDYTTKVIELYEKKNPHVHIEAEFANWDDYWKKLAPMSAAGQLPDVIQMDTAYLAQYGKKNQLEDLTPYTKDGTIDVSSIDENMLSGGKIDNKLYGFTLGVNVLSVIANEDLLKKAGVSINQENWTWEDYEKLAYDLQEKAGVYGSNGMHPPDIFFPYYLRTKGERFYKEDGTGLAYQDDQLFVDYFERQLRLVKAKTSPTPDESAQIKGMEDDFIVKGKSAITWNYSNQYLGFARLTDSPLSLYLPPEQMQEKALTLKPSMLFSIPKSSEHKKEAAKFINFFVNNEEANQLIKGERGVPVSDKVADAIKPKLNEEETNIVEYVETASKNISKADPPEPVGSAEVIKLLKDTSDQILYQKVSPEKAAKTFRKKANEILERNN</sequence>
<feature type="chain" id="PRO_0000364347" description="Putative ABC transporter substrate-binding protein YesO">
    <location>
        <begin position="1"/>
        <end position="427"/>
    </location>
</feature>
<feature type="strand" evidence="4">
    <location>
        <begin position="35"/>
        <end position="40"/>
    </location>
</feature>
<feature type="helix" evidence="4">
    <location>
        <begin position="43"/>
        <end position="59"/>
    </location>
</feature>
<feature type="strand" evidence="4">
    <location>
        <begin position="65"/>
        <end position="70"/>
    </location>
</feature>
<feature type="helix" evidence="4">
    <location>
        <begin position="72"/>
        <end position="84"/>
    </location>
</feature>
<feature type="strand" evidence="4">
    <location>
        <begin position="90"/>
        <end position="94"/>
    </location>
</feature>
<feature type="helix" evidence="4">
    <location>
        <begin position="96"/>
        <end position="103"/>
    </location>
</feature>
<feature type="turn" evidence="4">
    <location>
        <begin position="104"/>
        <end position="106"/>
    </location>
</feature>
<feature type="helix" evidence="4">
    <location>
        <begin position="112"/>
        <end position="116"/>
    </location>
</feature>
<feature type="strand" evidence="3">
    <location>
        <begin position="117"/>
        <end position="120"/>
    </location>
</feature>
<feature type="helix" evidence="4">
    <location>
        <begin position="127"/>
        <end position="130"/>
    </location>
</feature>
<feature type="helix" evidence="4">
    <location>
        <begin position="131"/>
        <end position="133"/>
    </location>
</feature>
<feature type="strand" evidence="4">
    <location>
        <begin position="141"/>
        <end position="143"/>
    </location>
</feature>
<feature type="strand" evidence="4">
    <location>
        <begin position="149"/>
        <end position="154"/>
    </location>
</feature>
<feature type="helix" evidence="4">
    <location>
        <begin position="155"/>
        <end position="161"/>
    </location>
</feature>
<feature type="turn" evidence="4">
    <location>
        <begin position="167"/>
        <end position="169"/>
    </location>
</feature>
<feature type="helix" evidence="4">
    <location>
        <begin position="172"/>
        <end position="186"/>
    </location>
</feature>
<feature type="strand" evidence="4">
    <location>
        <begin position="187"/>
        <end position="190"/>
    </location>
</feature>
<feature type="helix" evidence="4">
    <location>
        <begin position="197"/>
        <end position="207"/>
    </location>
</feature>
<feature type="strand" evidence="4">
    <location>
        <begin position="217"/>
        <end position="221"/>
    </location>
</feature>
<feature type="helix" evidence="4">
    <location>
        <begin position="225"/>
        <end position="240"/>
    </location>
</feature>
<feature type="helix" evidence="4">
    <location>
        <begin position="247"/>
        <end position="251"/>
    </location>
</feature>
<feature type="helix" evidence="4">
    <location>
        <begin position="256"/>
        <end position="258"/>
    </location>
</feature>
<feature type="turn" evidence="4">
    <location>
        <begin position="260"/>
        <end position="264"/>
    </location>
</feature>
<feature type="strand" evidence="4">
    <location>
        <begin position="265"/>
        <end position="272"/>
    </location>
</feature>
<feature type="helix" evidence="4">
    <location>
        <begin position="275"/>
        <end position="282"/>
    </location>
</feature>
<feature type="strand" evidence="4">
    <location>
        <begin position="287"/>
        <end position="290"/>
    </location>
</feature>
<feature type="turn" evidence="4">
    <location>
        <begin position="296"/>
        <end position="299"/>
    </location>
</feature>
<feature type="strand" evidence="4">
    <location>
        <begin position="302"/>
        <end position="305"/>
    </location>
</feature>
<feature type="strand" evidence="4">
    <location>
        <begin position="308"/>
        <end position="310"/>
    </location>
</feature>
<feature type="helix" evidence="4">
    <location>
        <begin position="318"/>
        <end position="330"/>
    </location>
</feature>
<feature type="helix" evidence="4">
    <location>
        <begin position="332"/>
        <end position="338"/>
    </location>
</feature>
<feature type="turn" evidence="4">
    <location>
        <begin position="339"/>
        <end position="342"/>
    </location>
</feature>
<feature type="helix" evidence="4">
    <location>
        <begin position="348"/>
        <end position="354"/>
    </location>
</feature>
<feature type="helix" evidence="4">
    <location>
        <begin position="355"/>
        <end position="357"/>
    </location>
</feature>
<feature type="helix" evidence="4">
    <location>
        <begin position="360"/>
        <end position="372"/>
    </location>
</feature>
<feature type="helix" evidence="4">
    <location>
        <begin position="373"/>
        <end position="375"/>
    </location>
</feature>
<feature type="helix" evidence="4">
    <location>
        <begin position="387"/>
        <end position="402"/>
    </location>
</feature>
<feature type="helix" evidence="4">
    <location>
        <begin position="408"/>
        <end position="423"/>
    </location>
</feature>
<comment type="function">
    <text evidence="1">May play a role in the degradation of type I rhamnogalacturonan derived from plant cell walls.</text>
</comment>
<comment type="induction">
    <text evidence="1">Up-regulated by growth on type I rhamnogalacturonan.</text>
</comment>
<comment type="similarity">
    <text evidence="2">Belongs to the bacterial solute-binding protein 1 family.</text>
</comment>
<protein>
    <recommendedName>
        <fullName>Putative ABC transporter substrate-binding protein YesO</fullName>
    </recommendedName>
</protein>
<accession>O31518</accession>
<name>YESO_BACSU</name>
<reference key="1">
    <citation type="journal article" date="1997" name="Nature">
        <title>The complete genome sequence of the Gram-positive bacterium Bacillus subtilis.</title>
        <authorList>
            <person name="Kunst F."/>
            <person name="Ogasawara N."/>
            <person name="Moszer I."/>
            <person name="Albertini A.M."/>
            <person name="Alloni G."/>
            <person name="Azevedo V."/>
            <person name="Bertero M.G."/>
            <person name="Bessieres P."/>
            <person name="Bolotin A."/>
            <person name="Borchert S."/>
            <person name="Borriss R."/>
            <person name="Boursier L."/>
            <person name="Brans A."/>
            <person name="Braun M."/>
            <person name="Brignell S.C."/>
            <person name="Bron S."/>
            <person name="Brouillet S."/>
            <person name="Bruschi C.V."/>
            <person name="Caldwell B."/>
            <person name="Capuano V."/>
            <person name="Carter N.M."/>
            <person name="Choi S.-K."/>
            <person name="Codani J.-J."/>
            <person name="Connerton I.F."/>
            <person name="Cummings N.J."/>
            <person name="Daniel R.A."/>
            <person name="Denizot F."/>
            <person name="Devine K.M."/>
            <person name="Duesterhoeft A."/>
            <person name="Ehrlich S.D."/>
            <person name="Emmerson P.T."/>
            <person name="Entian K.-D."/>
            <person name="Errington J."/>
            <person name="Fabret C."/>
            <person name="Ferrari E."/>
            <person name="Foulger D."/>
            <person name="Fritz C."/>
            <person name="Fujita M."/>
            <person name="Fujita Y."/>
            <person name="Fuma S."/>
            <person name="Galizzi A."/>
            <person name="Galleron N."/>
            <person name="Ghim S.-Y."/>
            <person name="Glaser P."/>
            <person name="Goffeau A."/>
            <person name="Golightly E.J."/>
            <person name="Grandi G."/>
            <person name="Guiseppi G."/>
            <person name="Guy B.J."/>
            <person name="Haga K."/>
            <person name="Haiech J."/>
            <person name="Harwood C.R."/>
            <person name="Henaut A."/>
            <person name="Hilbert H."/>
            <person name="Holsappel S."/>
            <person name="Hosono S."/>
            <person name="Hullo M.-F."/>
            <person name="Itaya M."/>
            <person name="Jones L.-M."/>
            <person name="Joris B."/>
            <person name="Karamata D."/>
            <person name="Kasahara Y."/>
            <person name="Klaerr-Blanchard M."/>
            <person name="Klein C."/>
            <person name="Kobayashi Y."/>
            <person name="Koetter P."/>
            <person name="Koningstein G."/>
            <person name="Krogh S."/>
            <person name="Kumano M."/>
            <person name="Kurita K."/>
            <person name="Lapidus A."/>
            <person name="Lardinois S."/>
            <person name="Lauber J."/>
            <person name="Lazarevic V."/>
            <person name="Lee S.-M."/>
            <person name="Levine A."/>
            <person name="Liu H."/>
            <person name="Masuda S."/>
            <person name="Mauel C."/>
            <person name="Medigue C."/>
            <person name="Medina N."/>
            <person name="Mellado R.P."/>
            <person name="Mizuno M."/>
            <person name="Moestl D."/>
            <person name="Nakai S."/>
            <person name="Noback M."/>
            <person name="Noone D."/>
            <person name="O'Reilly M."/>
            <person name="Ogawa K."/>
            <person name="Ogiwara A."/>
            <person name="Oudega B."/>
            <person name="Park S.-H."/>
            <person name="Parro V."/>
            <person name="Pohl T.M."/>
            <person name="Portetelle D."/>
            <person name="Porwollik S."/>
            <person name="Prescott A.M."/>
            <person name="Presecan E."/>
            <person name="Pujic P."/>
            <person name="Purnelle B."/>
            <person name="Rapoport G."/>
            <person name="Rey M."/>
            <person name="Reynolds S."/>
            <person name="Rieger M."/>
            <person name="Rivolta C."/>
            <person name="Rocha E."/>
            <person name="Roche B."/>
            <person name="Rose M."/>
            <person name="Sadaie Y."/>
            <person name="Sato T."/>
            <person name="Scanlan E."/>
            <person name="Schleich S."/>
            <person name="Schroeter R."/>
            <person name="Scoffone F."/>
            <person name="Sekiguchi J."/>
            <person name="Sekowska A."/>
            <person name="Seror S.J."/>
            <person name="Serror P."/>
            <person name="Shin B.-S."/>
            <person name="Soldo B."/>
            <person name="Sorokin A."/>
            <person name="Tacconi E."/>
            <person name="Takagi T."/>
            <person name="Takahashi H."/>
            <person name="Takemaru K."/>
            <person name="Takeuchi M."/>
            <person name="Tamakoshi A."/>
            <person name="Tanaka T."/>
            <person name="Terpstra P."/>
            <person name="Tognoni A."/>
            <person name="Tosato V."/>
            <person name="Uchiyama S."/>
            <person name="Vandenbol M."/>
            <person name="Vannier F."/>
            <person name="Vassarotti A."/>
            <person name="Viari A."/>
            <person name="Wambutt R."/>
            <person name="Wedler E."/>
            <person name="Wedler H."/>
            <person name="Weitzenegger T."/>
            <person name="Winters P."/>
            <person name="Wipat A."/>
            <person name="Yamamoto H."/>
            <person name="Yamane K."/>
            <person name="Yasumoto K."/>
            <person name="Yata K."/>
            <person name="Yoshida K."/>
            <person name="Yoshikawa H.-F."/>
            <person name="Zumstein E."/>
            <person name="Yoshikawa H."/>
            <person name="Danchin A."/>
        </authorList>
    </citation>
    <scope>NUCLEOTIDE SEQUENCE [LARGE SCALE GENOMIC DNA]</scope>
    <source>
        <strain>168</strain>
    </source>
</reference>
<reference key="2">
    <citation type="journal article" date="2007" name="Appl. Environ. Microbiol.">
        <title>Plant cell wall degradation by saprophytic Bacillus subtilis strains: gene clusters responsible for rhamnogalacturonan depolymerization.</title>
        <authorList>
            <person name="Ochiai A."/>
            <person name="Itoh T."/>
            <person name="Kawamata A."/>
            <person name="Hashimoto W."/>
            <person name="Murata K."/>
        </authorList>
    </citation>
    <scope>FUNCTION IN DEGRADATION OF TYPE I RHAMNOGALACTURONAN</scope>
    <scope>INDUCTION</scope>
</reference>
<proteinExistence type="evidence at protein level"/>
<evidence type="ECO:0000269" key="1">
    <source>
    </source>
</evidence>
<evidence type="ECO:0000305" key="2"/>
<evidence type="ECO:0007829" key="3">
    <source>
        <dbReference type="PDB" id="4R6K"/>
    </source>
</evidence>
<evidence type="ECO:0007829" key="4">
    <source>
        <dbReference type="PDB" id="5Z6B"/>
    </source>
</evidence>